<keyword id="KW-0240">DNA-directed RNA polymerase</keyword>
<keyword id="KW-0548">Nucleotidyltransferase</keyword>
<keyword id="KW-0804">Transcription</keyword>
<keyword id="KW-0808">Transferase</keyword>
<comment type="function">
    <text evidence="1">DNA-dependent RNA polymerase catalyzes the transcription of DNA into RNA using the four ribonucleoside triphosphates as substrates.</text>
</comment>
<comment type="catalytic activity">
    <reaction evidence="1">
        <text>RNA(n) + a ribonucleoside 5'-triphosphate = RNA(n+1) + diphosphate</text>
        <dbReference type="Rhea" id="RHEA:21248"/>
        <dbReference type="Rhea" id="RHEA-COMP:14527"/>
        <dbReference type="Rhea" id="RHEA-COMP:17342"/>
        <dbReference type="ChEBI" id="CHEBI:33019"/>
        <dbReference type="ChEBI" id="CHEBI:61557"/>
        <dbReference type="ChEBI" id="CHEBI:140395"/>
        <dbReference type="EC" id="2.7.7.6"/>
    </reaction>
</comment>
<comment type="subunit">
    <text evidence="1">Homodimer. The RNAP catalytic core consists of 2 alpha, 1 beta, 1 beta' and 1 omega subunit. When a sigma factor is associated with the core the holoenzyme is formed, which can initiate transcription.</text>
</comment>
<comment type="domain">
    <text evidence="1">The N-terminal domain is essential for RNAP assembly and basal transcription, whereas the C-terminal domain is involved in interaction with transcriptional regulators and with upstream promoter elements.</text>
</comment>
<comment type="similarity">
    <text evidence="1">Belongs to the RNA polymerase alpha chain family.</text>
</comment>
<dbReference type="EC" id="2.7.7.6" evidence="1"/>
<dbReference type="EMBL" id="BX251410">
    <property type="protein sequence ID" value="CAD66909.1"/>
    <property type="molecule type" value="Genomic_DNA"/>
</dbReference>
<dbReference type="RefSeq" id="WP_011096190.1">
    <property type="nucleotide sequence ID" value="NC_004551.1"/>
</dbReference>
<dbReference type="SMR" id="Q820D8"/>
<dbReference type="GeneID" id="67388008"/>
<dbReference type="KEGG" id="tws:TW232"/>
<dbReference type="HOGENOM" id="CLU_053084_0_1_11"/>
<dbReference type="GO" id="GO:0005737">
    <property type="term" value="C:cytoplasm"/>
    <property type="evidence" value="ECO:0007669"/>
    <property type="project" value="UniProtKB-ARBA"/>
</dbReference>
<dbReference type="GO" id="GO:0000428">
    <property type="term" value="C:DNA-directed RNA polymerase complex"/>
    <property type="evidence" value="ECO:0007669"/>
    <property type="project" value="UniProtKB-KW"/>
</dbReference>
<dbReference type="GO" id="GO:0003677">
    <property type="term" value="F:DNA binding"/>
    <property type="evidence" value="ECO:0007669"/>
    <property type="project" value="UniProtKB-UniRule"/>
</dbReference>
<dbReference type="GO" id="GO:0003899">
    <property type="term" value="F:DNA-directed RNA polymerase activity"/>
    <property type="evidence" value="ECO:0007669"/>
    <property type="project" value="UniProtKB-UniRule"/>
</dbReference>
<dbReference type="GO" id="GO:0046983">
    <property type="term" value="F:protein dimerization activity"/>
    <property type="evidence" value="ECO:0007669"/>
    <property type="project" value="InterPro"/>
</dbReference>
<dbReference type="GO" id="GO:0006351">
    <property type="term" value="P:DNA-templated transcription"/>
    <property type="evidence" value="ECO:0007669"/>
    <property type="project" value="UniProtKB-UniRule"/>
</dbReference>
<dbReference type="CDD" id="cd06928">
    <property type="entry name" value="RNAP_alpha_NTD"/>
    <property type="match status" value="1"/>
</dbReference>
<dbReference type="FunFam" id="2.170.120.12:FF:000001">
    <property type="entry name" value="DNA-directed RNA polymerase subunit alpha"/>
    <property type="match status" value="1"/>
</dbReference>
<dbReference type="Gene3D" id="1.10.150.20">
    <property type="entry name" value="5' to 3' exonuclease, C-terminal subdomain"/>
    <property type="match status" value="1"/>
</dbReference>
<dbReference type="Gene3D" id="2.170.120.12">
    <property type="entry name" value="DNA-directed RNA polymerase, insert domain"/>
    <property type="match status" value="1"/>
</dbReference>
<dbReference type="Gene3D" id="3.30.1360.10">
    <property type="entry name" value="RNA polymerase, RBP11-like subunit"/>
    <property type="match status" value="1"/>
</dbReference>
<dbReference type="HAMAP" id="MF_00059">
    <property type="entry name" value="RNApol_bact_RpoA"/>
    <property type="match status" value="1"/>
</dbReference>
<dbReference type="InterPro" id="IPR011262">
    <property type="entry name" value="DNA-dir_RNA_pol_insert"/>
</dbReference>
<dbReference type="InterPro" id="IPR011263">
    <property type="entry name" value="DNA-dir_RNA_pol_RpoA/D/Rpb3"/>
</dbReference>
<dbReference type="InterPro" id="IPR011773">
    <property type="entry name" value="DNA-dir_RpoA"/>
</dbReference>
<dbReference type="InterPro" id="IPR036603">
    <property type="entry name" value="RBP11-like"/>
</dbReference>
<dbReference type="InterPro" id="IPR011260">
    <property type="entry name" value="RNAP_asu_C"/>
</dbReference>
<dbReference type="InterPro" id="IPR036643">
    <property type="entry name" value="RNApol_insert_sf"/>
</dbReference>
<dbReference type="NCBIfam" id="NF003513">
    <property type="entry name" value="PRK05182.1-2"/>
    <property type="match status" value="1"/>
</dbReference>
<dbReference type="NCBIfam" id="NF003514">
    <property type="entry name" value="PRK05182.1-4"/>
    <property type="match status" value="1"/>
</dbReference>
<dbReference type="NCBIfam" id="NF003519">
    <property type="entry name" value="PRK05182.2-5"/>
    <property type="match status" value="1"/>
</dbReference>
<dbReference type="NCBIfam" id="TIGR02027">
    <property type="entry name" value="rpoA"/>
    <property type="match status" value="1"/>
</dbReference>
<dbReference type="Pfam" id="PF01000">
    <property type="entry name" value="RNA_pol_A_bac"/>
    <property type="match status" value="1"/>
</dbReference>
<dbReference type="Pfam" id="PF03118">
    <property type="entry name" value="RNA_pol_A_CTD"/>
    <property type="match status" value="1"/>
</dbReference>
<dbReference type="Pfam" id="PF01193">
    <property type="entry name" value="RNA_pol_L"/>
    <property type="match status" value="1"/>
</dbReference>
<dbReference type="SMART" id="SM00662">
    <property type="entry name" value="RPOLD"/>
    <property type="match status" value="1"/>
</dbReference>
<dbReference type="SUPFAM" id="SSF47789">
    <property type="entry name" value="C-terminal domain of RNA polymerase alpha subunit"/>
    <property type="match status" value="1"/>
</dbReference>
<dbReference type="SUPFAM" id="SSF56553">
    <property type="entry name" value="Insert subdomain of RNA polymerase alpha subunit"/>
    <property type="match status" value="1"/>
</dbReference>
<dbReference type="SUPFAM" id="SSF55257">
    <property type="entry name" value="RBP11-like subunits of RNA polymerase"/>
    <property type="match status" value="1"/>
</dbReference>
<sequence length="327" mass="35890">MLIAHRPTLIEKKVSDIRSRFIIEPLEPGFGYTLGNSLRRTLLSSIPGAAVTSINIQGVMHEFSTIPGVKEDVTEIVLNVKRLVISSEIDEPFTVRLYKTGEGEVLAKDIEVPTGIEIGNGDLVIATLAKDAVFDMQLTIERGRGYVSAEQNRNDGMSLAGHIPVDSIYSPVHKVTYRVEATRAGERTDFDRLIIDVETKPSILPRDAVASAGKTLCELFGLARELNSQAEGVEFGVDSMIPESDEDLRIPIEDLGLSVRSYNCLKREGVNYVSELLGFSEQELLDIRNFGQKSADEVQEKLAELGHSLKGSVPGFDGSYFDPNYGS</sequence>
<gene>
    <name evidence="1" type="primary">rpoA</name>
    <name type="ordered locus">TW232</name>
</gene>
<evidence type="ECO:0000255" key="1">
    <source>
        <dbReference type="HAMAP-Rule" id="MF_00059"/>
    </source>
</evidence>
<reference key="1">
    <citation type="journal article" date="2003" name="Lancet">
        <title>Sequencing and analysis of the genome of the Whipple's disease bacterium Tropheryma whipplei.</title>
        <authorList>
            <person name="Bentley S.D."/>
            <person name="Maiwald M."/>
            <person name="Murphy L.D."/>
            <person name="Pallen M.J."/>
            <person name="Yeats C.A."/>
            <person name="Dover L.G."/>
            <person name="Norbertczak H.T."/>
            <person name="Besra G.S."/>
            <person name="Quail M.A."/>
            <person name="Harris D.E."/>
            <person name="von Herbay A."/>
            <person name="Goble A."/>
            <person name="Rutter S."/>
            <person name="Squares R."/>
            <person name="Squares S."/>
            <person name="Barrell B.G."/>
            <person name="Parkhill J."/>
            <person name="Relman D.A."/>
        </authorList>
    </citation>
    <scope>NUCLEOTIDE SEQUENCE [LARGE SCALE GENOMIC DNA]</scope>
    <source>
        <strain>TW08/27</strain>
    </source>
</reference>
<protein>
    <recommendedName>
        <fullName evidence="1">DNA-directed RNA polymerase subunit alpha</fullName>
        <shortName evidence="1">RNAP subunit alpha</shortName>
        <ecNumber evidence="1">2.7.7.6</ecNumber>
    </recommendedName>
    <alternativeName>
        <fullName evidence="1">RNA polymerase subunit alpha</fullName>
    </alternativeName>
    <alternativeName>
        <fullName evidence="1">Transcriptase subunit alpha</fullName>
    </alternativeName>
</protein>
<name>RPOA_TROW8</name>
<feature type="chain" id="PRO_0000175414" description="DNA-directed RNA polymerase subunit alpha">
    <location>
        <begin position="1"/>
        <end position="327"/>
    </location>
</feature>
<feature type="region of interest" description="Alpha N-terminal domain (alpha-NTD)" evidence="1">
    <location>
        <begin position="1"/>
        <end position="227"/>
    </location>
</feature>
<feature type="region of interest" description="Alpha C-terminal domain (alpha-CTD)" evidence="1">
    <location>
        <begin position="244"/>
        <end position="327"/>
    </location>
</feature>
<organism>
    <name type="scientific">Tropheryma whipplei (strain TW08/27)</name>
    <name type="common">Whipple's bacillus</name>
    <dbReference type="NCBI Taxonomy" id="218496"/>
    <lineage>
        <taxon>Bacteria</taxon>
        <taxon>Bacillati</taxon>
        <taxon>Actinomycetota</taxon>
        <taxon>Actinomycetes</taxon>
        <taxon>Micrococcales</taxon>
        <taxon>Tropherymataceae</taxon>
        <taxon>Tropheryma</taxon>
    </lineage>
</organism>
<proteinExistence type="inferred from homology"/>
<accession>Q820D8</accession>